<comment type="function">
    <text evidence="1">This is one of the proteins that bind and probably mediate the attachment of the 5S RNA into the large ribosomal subunit, where it forms part of the central protuberance. In the 70S ribosome it contacts protein S13 of the 30S subunit (bridge B1b), connecting the 2 subunits; this bridge is implicated in subunit movement. Contacts the P site tRNA; the 5S rRNA and some of its associated proteins might help stabilize positioning of ribosome-bound tRNAs.</text>
</comment>
<comment type="subunit">
    <text evidence="1">Part of the 50S ribosomal subunit; part of the 5S rRNA/L5/L18/L25 subcomplex. Contacts the 5S rRNA and the P site tRNA. Forms a bridge to the 30S subunit in the 70S ribosome.</text>
</comment>
<comment type="similarity">
    <text evidence="1">Belongs to the universal ribosomal protein uL5 family.</text>
</comment>
<evidence type="ECO:0000255" key="1">
    <source>
        <dbReference type="HAMAP-Rule" id="MF_01333"/>
    </source>
</evidence>
<evidence type="ECO:0000305" key="2"/>
<proteinExistence type="inferred from homology"/>
<keyword id="KW-0687">Ribonucleoprotein</keyword>
<keyword id="KW-0689">Ribosomal protein</keyword>
<keyword id="KW-0694">RNA-binding</keyword>
<keyword id="KW-0699">rRNA-binding</keyword>
<keyword id="KW-0820">tRNA-binding</keyword>
<organism>
    <name type="scientific">Brachyspira hyodysenteriae (strain ATCC 49526 / WA1)</name>
    <dbReference type="NCBI Taxonomy" id="565034"/>
    <lineage>
        <taxon>Bacteria</taxon>
        <taxon>Pseudomonadati</taxon>
        <taxon>Spirochaetota</taxon>
        <taxon>Spirochaetia</taxon>
        <taxon>Brachyspirales</taxon>
        <taxon>Brachyspiraceae</taxon>
        <taxon>Brachyspira</taxon>
    </lineage>
</organism>
<protein>
    <recommendedName>
        <fullName evidence="1">Large ribosomal subunit protein uL5</fullName>
    </recommendedName>
    <alternativeName>
        <fullName evidence="2">50S ribosomal protein L5</fullName>
    </alternativeName>
</protein>
<feature type="chain" id="PRO_1000166114" description="Large ribosomal subunit protein uL5">
    <location>
        <begin position="1"/>
        <end position="187"/>
    </location>
</feature>
<sequence>MSVLKDRYENEIKQSLLKDMNLSSTMAIPKIEKIIINMGVTQAVTDKKYVDSAVEELSQIAGQRAVVTRAKKSIANFKLRQGMPIGCRVTLRGERMYDFLERLIFIALPRVRDFQGIPRRGFDGNGNYNLGIKEHTIFPEISFDKTDAVKGLNITIVTTADNDDMARTLLERVGLPFRAAPKSQENK</sequence>
<gene>
    <name evidence="1" type="primary">rplE</name>
    <name type="ordered locus">BHWA1_02136</name>
</gene>
<reference key="1">
    <citation type="journal article" date="2009" name="PLoS ONE">
        <title>Genome sequence of the pathogenic intestinal spirochete Brachyspira hyodysenteriae reveals adaptations to its lifestyle in the porcine large intestine.</title>
        <authorList>
            <person name="Bellgard M.I."/>
            <person name="Wanchanthuek P."/>
            <person name="La T."/>
            <person name="Ryan K."/>
            <person name="Moolhuijzen P."/>
            <person name="Albertyn Z."/>
            <person name="Shaban B."/>
            <person name="Motro Y."/>
            <person name="Dunn D.S."/>
            <person name="Schibeci D."/>
            <person name="Hunter A."/>
            <person name="Barrero R."/>
            <person name="Phillips N.D."/>
            <person name="Hampson D.J."/>
        </authorList>
    </citation>
    <scope>NUCLEOTIDE SEQUENCE [LARGE SCALE GENOMIC DNA]</scope>
    <source>
        <strain>ATCC 49526 / WA1</strain>
    </source>
</reference>
<dbReference type="EMBL" id="CP001357">
    <property type="protein sequence ID" value="ACN84594.1"/>
    <property type="molecule type" value="Genomic_DNA"/>
</dbReference>
<dbReference type="RefSeq" id="WP_012671628.1">
    <property type="nucleotide sequence ID" value="NC_012225.1"/>
</dbReference>
<dbReference type="SMR" id="C0QW08"/>
<dbReference type="STRING" id="565034.BHWA1_02136"/>
<dbReference type="GeneID" id="63963288"/>
<dbReference type="KEGG" id="bhy:BHWA1_02136"/>
<dbReference type="eggNOG" id="COG0094">
    <property type="taxonomic scope" value="Bacteria"/>
</dbReference>
<dbReference type="HOGENOM" id="CLU_061015_2_1_12"/>
<dbReference type="Proteomes" id="UP000001803">
    <property type="component" value="Chromosome"/>
</dbReference>
<dbReference type="GO" id="GO:1990904">
    <property type="term" value="C:ribonucleoprotein complex"/>
    <property type="evidence" value="ECO:0007669"/>
    <property type="project" value="UniProtKB-KW"/>
</dbReference>
<dbReference type="GO" id="GO:0005840">
    <property type="term" value="C:ribosome"/>
    <property type="evidence" value="ECO:0007669"/>
    <property type="project" value="UniProtKB-KW"/>
</dbReference>
<dbReference type="GO" id="GO:0019843">
    <property type="term" value="F:rRNA binding"/>
    <property type="evidence" value="ECO:0007669"/>
    <property type="project" value="UniProtKB-UniRule"/>
</dbReference>
<dbReference type="GO" id="GO:0003735">
    <property type="term" value="F:structural constituent of ribosome"/>
    <property type="evidence" value="ECO:0007669"/>
    <property type="project" value="InterPro"/>
</dbReference>
<dbReference type="GO" id="GO:0000049">
    <property type="term" value="F:tRNA binding"/>
    <property type="evidence" value="ECO:0007669"/>
    <property type="project" value="UniProtKB-UniRule"/>
</dbReference>
<dbReference type="GO" id="GO:0006412">
    <property type="term" value="P:translation"/>
    <property type="evidence" value="ECO:0007669"/>
    <property type="project" value="UniProtKB-UniRule"/>
</dbReference>
<dbReference type="FunFam" id="3.30.1440.10:FF:000001">
    <property type="entry name" value="50S ribosomal protein L5"/>
    <property type="match status" value="1"/>
</dbReference>
<dbReference type="Gene3D" id="3.30.1440.10">
    <property type="match status" value="1"/>
</dbReference>
<dbReference type="HAMAP" id="MF_01333_B">
    <property type="entry name" value="Ribosomal_uL5_B"/>
    <property type="match status" value="1"/>
</dbReference>
<dbReference type="InterPro" id="IPR002132">
    <property type="entry name" value="Ribosomal_uL5"/>
</dbReference>
<dbReference type="InterPro" id="IPR020930">
    <property type="entry name" value="Ribosomal_uL5_bac-type"/>
</dbReference>
<dbReference type="InterPro" id="IPR031309">
    <property type="entry name" value="Ribosomal_uL5_C"/>
</dbReference>
<dbReference type="InterPro" id="IPR020929">
    <property type="entry name" value="Ribosomal_uL5_CS"/>
</dbReference>
<dbReference type="InterPro" id="IPR022803">
    <property type="entry name" value="Ribosomal_uL5_dom_sf"/>
</dbReference>
<dbReference type="InterPro" id="IPR031310">
    <property type="entry name" value="Ribosomal_uL5_N"/>
</dbReference>
<dbReference type="NCBIfam" id="NF000585">
    <property type="entry name" value="PRK00010.1"/>
    <property type="match status" value="1"/>
</dbReference>
<dbReference type="PANTHER" id="PTHR11994">
    <property type="entry name" value="60S RIBOSOMAL PROTEIN L11-RELATED"/>
    <property type="match status" value="1"/>
</dbReference>
<dbReference type="Pfam" id="PF00281">
    <property type="entry name" value="Ribosomal_L5"/>
    <property type="match status" value="1"/>
</dbReference>
<dbReference type="Pfam" id="PF00673">
    <property type="entry name" value="Ribosomal_L5_C"/>
    <property type="match status" value="1"/>
</dbReference>
<dbReference type="PIRSF" id="PIRSF002161">
    <property type="entry name" value="Ribosomal_L5"/>
    <property type="match status" value="1"/>
</dbReference>
<dbReference type="SUPFAM" id="SSF55282">
    <property type="entry name" value="RL5-like"/>
    <property type="match status" value="1"/>
</dbReference>
<dbReference type="PROSITE" id="PS00358">
    <property type="entry name" value="RIBOSOMAL_L5"/>
    <property type="match status" value="1"/>
</dbReference>
<name>RL5_BRAHW</name>
<accession>C0QW08</accession>